<feature type="chain" id="PRO_0000101210" description="Signal recognition particle subunit SRP54 1">
    <location>
        <begin position="1"/>
        <end position="496"/>
    </location>
</feature>
<feature type="region of interest" description="G-domain">
    <location>
        <begin position="1"/>
        <end position="296"/>
    </location>
</feature>
<feature type="region of interest" description="M-domain">
    <location>
        <begin position="297"/>
        <end position="496"/>
    </location>
</feature>
<feature type="binding site" evidence="1">
    <location>
        <begin position="108"/>
        <end position="115"/>
    </location>
    <ligand>
        <name>GTP</name>
        <dbReference type="ChEBI" id="CHEBI:37565"/>
    </ligand>
</feature>
<feature type="binding site" evidence="1">
    <location>
        <begin position="191"/>
        <end position="195"/>
    </location>
    <ligand>
        <name>GTP</name>
        <dbReference type="ChEBI" id="CHEBI:37565"/>
    </ligand>
</feature>
<feature type="binding site" evidence="1">
    <location>
        <begin position="249"/>
        <end position="252"/>
    </location>
    <ligand>
        <name>GTP</name>
        <dbReference type="ChEBI" id="CHEBI:37565"/>
    </ligand>
</feature>
<keyword id="KW-0963">Cytoplasm</keyword>
<keyword id="KW-0256">Endoplasmic reticulum</keyword>
<keyword id="KW-0342">GTP-binding</keyword>
<keyword id="KW-0378">Hydrolase</keyword>
<keyword id="KW-0547">Nucleotide-binding</keyword>
<keyword id="KW-1185">Reference proteome</keyword>
<keyword id="KW-0687">Ribonucleoprotein</keyword>
<keyword id="KW-0694">RNA-binding</keyword>
<keyword id="KW-0733">Signal recognition particle</keyword>
<accession>P49971</accession>
<name>SR541_SOLLC</name>
<dbReference type="EC" id="3.6.5.4" evidence="3"/>
<dbReference type="EMBL" id="Z34518">
    <property type="protein sequence ID" value="CAA84275.1"/>
    <property type="molecule type" value="Genomic_DNA"/>
</dbReference>
<dbReference type="PIR" id="S51597">
    <property type="entry name" value="S51597"/>
</dbReference>
<dbReference type="SMR" id="P49971"/>
<dbReference type="FunCoup" id="P49971">
    <property type="interactions" value="3689"/>
</dbReference>
<dbReference type="STRING" id="4081.P49971"/>
<dbReference type="PaxDb" id="4081-Solyc03g116810.2.1"/>
<dbReference type="eggNOG" id="KOG0780">
    <property type="taxonomic scope" value="Eukaryota"/>
</dbReference>
<dbReference type="InParanoid" id="P49971"/>
<dbReference type="Proteomes" id="UP000004994">
    <property type="component" value="Unplaced"/>
</dbReference>
<dbReference type="ExpressionAtlas" id="P49971">
    <property type="expression patterns" value="baseline and differential"/>
</dbReference>
<dbReference type="GO" id="GO:0005829">
    <property type="term" value="C:cytosol"/>
    <property type="evidence" value="ECO:0000318"/>
    <property type="project" value="GO_Central"/>
</dbReference>
<dbReference type="GO" id="GO:0005783">
    <property type="term" value="C:endoplasmic reticulum"/>
    <property type="evidence" value="ECO:0007669"/>
    <property type="project" value="UniProtKB-SubCell"/>
</dbReference>
<dbReference type="GO" id="GO:0005786">
    <property type="term" value="C:signal recognition particle, endoplasmic reticulum targeting"/>
    <property type="evidence" value="ECO:0000318"/>
    <property type="project" value="GO_Central"/>
</dbReference>
<dbReference type="GO" id="GO:0008312">
    <property type="term" value="F:7S RNA binding"/>
    <property type="evidence" value="ECO:0000318"/>
    <property type="project" value="GO_Central"/>
</dbReference>
<dbReference type="GO" id="GO:0016887">
    <property type="term" value="F:ATP hydrolysis activity"/>
    <property type="evidence" value="ECO:0007669"/>
    <property type="project" value="InterPro"/>
</dbReference>
<dbReference type="GO" id="GO:0030942">
    <property type="term" value="F:endoplasmic reticulum signal peptide binding"/>
    <property type="evidence" value="ECO:0000318"/>
    <property type="project" value="GO_Central"/>
</dbReference>
<dbReference type="GO" id="GO:0005525">
    <property type="term" value="F:GTP binding"/>
    <property type="evidence" value="ECO:0007669"/>
    <property type="project" value="UniProtKB-KW"/>
</dbReference>
<dbReference type="GO" id="GO:0003924">
    <property type="term" value="F:GTPase activity"/>
    <property type="evidence" value="ECO:0007669"/>
    <property type="project" value="InterPro"/>
</dbReference>
<dbReference type="GO" id="GO:0006616">
    <property type="term" value="P:SRP-dependent cotranslational protein targeting to membrane, translocation"/>
    <property type="evidence" value="ECO:0000318"/>
    <property type="project" value="GO_Central"/>
</dbReference>
<dbReference type="CDD" id="cd17875">
    <property type="entry name" value="SRP54_G"/>
    <property type="match status" value="1"/>
</dbReference>
<dbReference type="FunFam" id="1.10.260.30:FF:000004">
    <property type="entry name" value="Signal recognition particle 54 kDa protein"/>
    <property type="match status" value="1"/>
</dbReference>
<dbReference type="FunFam" id="3.40.50.300:FF:000022">
    <property type="entry name" value="Signal recognition particle 54 kDa subunit"/>
    <property type="match status" value="1"/>
</dbReference>
<dbReference type="FunFam" id="1.20.120.140:FF:000001">
    <property type="entry name" value="Signal recognition particle GTPase"/>
    <property type="match status" value="1"/>
</dbReference>
<dbReference type="Gene3D" id="3.40.50.300">
    <property type="entry name" value="P-loop containing nucleotide triphosphate hydrolases"/>
    <property type="match status" value="1"/>
</dbReference>
<dbReference type="Gene3D" id="1.20.120.140">
    <property type="entry name" value="Signal recognition particle SRP54, nucleotide-binding domain"/>
    <property type="match status" value="1"/>
</dbReference>
<dbReference type="Gene3D" id="1.10.260.30">
    <property type="entry name" value="Signal recognition particle, SRP54 subunit, M-domain"/>
    <property type="match status" value="1"/>
</dbReference>
<dbReference type="HAMAP" id="MF_00306">
    <property type="entry name" value="SRP54"/>
    <property type="match status" value="1"/>
</dbReference>
<dbReference type="InterPro" id="IPR003593">
    <property type="entry name" value="AAA+_ATPase"/>
</dbReference>
<dbReference type="InterPro" id="IPR027417">
    <property type="entry name" value="P-loop_NTPase"/>
</dbReference>
<dbReference type="InterPro" id="IPR036891">
    <property type="entry name" value="Signal_recog_part_SRP54_M_sf"/>
</dbReference>
<dbReference type="InterPro" id="IPR013822">
    <property type="entry name" value="Signal_recog_particl_SRP54_hlx"/>
</dbReference>
<dbReference type="InterPro" id="IPR004125">
    <property type="entry name" value="Signal_recog_particle_SRP54_M"/>
</dbReference>
<dbReference type="InterPro" id="IPR036225">
    <property type="entry name" value="SRP/SRP_N"/>
</dbReference>
<dbReference type="InterPro" id="IPR022941">
    <property type="entry name" value="SRP54"/>
</dbReference>
<dbReference type="InterPro" id="IPR006325">
    <property type="entry name" value="SRP54_euk"/>
</dbReference>
<dbReference type="InterPro" id="IPR000897">
    <property type="entry name" value="SRP54_GTPase_dom"/>
</dbReference>
<dbReference type="InterPro" id="IPR042101">
    <property type="entry name" value="SRP54_N_sf"/>
</dbReference>
<dbReference type="NCBIfam" id="TIGR01425">
    <property type="entry name" value="SRP54_euk"/>
    <property type="match status" value="1"/>
</dbReference>
<dbReference type="PANTHER" id="PTHR11564">
    <property type="entry name" value="SIGNAL RECOGNITION PARTICLE 54K PROTEIN SRP54"/>
    <property type="match status" value="1"/>
</dbReference>
<dbReference type="PANTHER" id="PTHR11564:SF29">
    <property type="entry name" value="SIGNAL RECOGNITION PARTICLE SUBUNIT SRP54 1"/>
    <property type="match status" value="1"/>
</dbReference>
<dbReference type="Pfam" id="PF00448">
    <property type="entry name" value="SRP54"/>
    <property type="match status" value="1"/>
</dbReference>
<dbReference type="Pfam" id="PF02881">
    <property type="entry name" value="SRP54_N"/>
    <property type="match status" value="1"/>
</dbReference>
<dbReference type="Pfam" id="PF02978">
    <property type="entry name" value="SRP_SPB"/>
    <property type="match status" value="1"/>
</dbReference>
<dbReference type="SMART" id="SM00382">
    <property type="entry name" value="AAA"/>
    <property type="match status" value="1"/>
</dbReference>
<dbReference type="SMART" id="SM00962">
    <property type="entry name" value="SRP54"/>
    <property type="match status" value="1"/>
</dbReference>
<dbReference type="SMART" id="SM00963">
    <property type="entry name" value="SRP54_N"/>
    <property type="match status" value="1"/>
</dbReference>
<dbReference type="SUPFAM" id="SSF47364">
    <property type="entry name" value="Domain of the SRP/SRP receptor G-proteins"/>
    <property type="match status" value="1"/>
</dbReference>
<dbReference type="SUPFAM" id="SSF52540">
    <property type="entry name" value="P-loop containing nucleoside triphosphate hydrolases"/>
    <property type="match status" value="1"/>
</dbReference>
<dbReference type="SUPFAM" id="SSF47446">
    <property type="entry name" value="Signal peptide-binding domain"/>
    <property type="match status" value="1"/>
</dbReference>
<dbReference type="PROSITE" id="PS00300">
    <property type="entry name" value="SRP54"/>
    <property type="match status" value="1"/>
</dbReference>
<organism>
    <name type="scientific">Solanum lycopersicum</name>
    <name type="common">Tomato</name>
    <name type="synonym">Lycopersicon esculentum</name>
    <dbReference type="NCBI Taxonomy" id="4081"/>
    <lineage>
        <taxon>Eukaryota</taxon>
        <taxon>Viridiplantae</taxon>
        <taxon>Streptophyta</taxon>
        <taxon>Embryophyta</taxon>
        <taxon>Tracheophyta</taxon>
        <taxon>Spermatophyta</taxon>
        <taxon>Magnoliopsida</taxon>
        <taxon>eudicotyledons</taxon>
        <taxon>Gunneridae</taxon>
        <taxon>Pentapetalae</taxon>
        <taxon>asterids</taxon>
        <taxon>lamiids</taxon>
        <taxon>Solanales</taxon>
        <taxon>Solanaceae</taxon>
        <taxon>Solanoideae</taxon>
        <taxon>Solaneae</taxon>
        <taxon>Solanum</taxon>
        <taxon>Solanum subgen. Lycopersicon</taxon>
    </lineage>
</organism>
<protein>
    <recommendedName>
        <fullName>Signal recognition particle subunit SRP54 1</fullName>
        <ecNumber evidence="3">3.6.5.4</ecNumber>
    </recommendedName>
    <alternativeName>
        <fullName>Signal recognition particle 54 kDa protein 1</fullName>
        <shortName>SRP54</shortName>
    </alternativeName>
</protein>
<reference key="1">
    <citation type="journal article" date="1994" name="Mol. Gen. Genet.">
        <title>Structural and functional characterisation of the signal recognition particle-specific 54 kDa protein (SRP54) of tomato.</title>
        <authorList>
            <person name="Krolkiewicz S."/>
            <person name="Sanger H.L."/>
            <person name="Niesbach-Klosgen U."/>
        </authorList>
    </citation>
    <scope>NUCLEOTIDE SEQUENCE [GENOMIC DNA]</scope>
    <source>
        <strain>cv. Rentita</strain>
    </source>
</reference>
<comment type="function">
    <text evidence="2 3">Component of the signal recognition particle (SRP) complex, a ribonucleoprotein complex that mediates the cotranslational targeting of secretory and membrane proteins to the endoplasmic reticulum (ER). As part of the SRP complex, associates with the SRP receptor (SR) component SRPRA to target secretory proteins to the endoplasmic reticulum membrane. Binds to the signal sequence of presecretory proteins when they emerge from the ribosomes. Displays basal GTPase activity, and stimulates reciprocal GTPase activation of the SR subunit SRPRA. Forms a guanosine 5'-triphosphate (GTP)-dependent complex with the SR subunit SRPRA. SR compaction and GTPase mediated rearrangement of SR drive SRP-mediated cotranslational protein translocation into the ER (By similarity). Requires the presence of SRP9/SRP14 and/or SRP19 to stably interact with RNA (By similarity).</text>
</comment>
<comment type="catalytic activity">
    <reaction evidence="3">
        <text>GTP + H2O = GDP + phosphate + H(+)</text>
        <dbReference type="Rhea" id="RHEA:19669"/>
        <dbReference type="ChEBI" id="CHEBI:15377"/>
        <dbReference type="ChEBI" id="CHEBI:15378"/>
        <dbReference type="ChEBI" id="CHEBI:37565"/>
        <dbReference type="ChEBI" id="CHEBI:43474"/>
        <dbReference type="ChEBI" id="CHEBI:58189"/>
        <dbReference type="EC" id="3.6.5.4"/>
    </reaction>
    <physiologicalReaction direction="left-to-right" evidence="3">
        <dbReference type="Rhea" id="RHEA:19670"/>
    </physiologicalReaction>
</comment>
<comment type="subunit">
    <text evidence="3">Component of a signal recognition particle (SRP) complex that consists of a 7SL RNA molecule of 300 nucleotides and six protein subunits: SRP72, SRP68, SRP54, SRP19, SRP14 and SRP9.</text>
</comment>
<comment type="subcellular location">
    <subcellularLocation>
        <location evidence="3">Cytoplasm</location>
    </subcellularLocation>
    <subcellularLocation>
        <location evidence="3">Endoplasmic reticulum</location>
    </subcellularLocation>
</comment>
<comment type="domain">
    <text evidence="3">The NG domain, also named G domain, is a special guanosine triphosphatase (GTPase) domain, which binds GTP and forms a guanosine 5'-triphosphate (GTP)-dependent complex with a homologous NG domain in the SRP receptor subunit SRPRA. The two NG domains undergo cooperative rearrangements upon their assembly, which culminate in the reciprocal activation of the GTPase activity of one another. SRP receptor compaction upon binding with cargo-loaded SRP and GTPase rearrangement drive SRP-mediated cotranslational protein translocation into the ER.</text>
</comment>
<comment type="domain">
    <text evidence="3">The M domain binds the 7SL RNA in presence of SRP19 and binds the signal sequence of presecretory proteins.</text>
</comment>
<comment type="similarity">
    <text evidence="4">Belongs to the GTP-binding SRP family. SRP54 subfamily.</text>
</comment>
<evidence type="ECO:0000250" key="1"/>
<evidence type="ECO:0000250" key="2">
    <source>
        <dbReference type="UniProtKB" id="P61010"/>
    </source>
</evidence>
<evidence type="ECO:0000250" key="3">
    <source>
        <dbReference type="UniProtKB" id="P61011"/>
    </source>
</evidence>
<evidence type="ECO:0000305" key="4"/>
<proteinExistence type="inferred from homology"/>
<sequence length="496" mass="54826">MVLAQLGGSISRALQQMSNATIIDEKVLNECLNEITRALLQADVQFKLVRDMSTNIKKIVNLEDLAAGHNKRRIIQQAVYNELCKILDPGKPAFTLKKGKPSVVMFVGLQGSGKTTTCTKYAYHHQKRGWKPALVCADTFRAGAFDQLKQNATKAKIPFYGSSYTESDPVKIAVDGVETFKKENCDLIIVDTSGRHKQEAALFEEMRQVSEAQKPDLVIFVMDSSIGQAAFDQAQAFRQSVAVGAVIVTKMDGHAKGGGALSRVAATKSPVIFIGTGEHMDEFEVFDVKPFVSRLLGMGDLSGLVNKIQDVVPMDQQPELLQKLSEGHFTLRIMYEQFQSMLKMGPLGVFSMLPGFSAEMMPQGREKESQAKFKRYMTMMDSMTDEELDSTNPKILTESRIMRIARGSGRLVHEVMEMLEEYKRLAKIFSKMKGLKIPKKGDMSSLSRNMNAQNMSKVLPPQMLKQIGGMGGLQNLMKQMGSAKDMMGMFGGGGGE</sequence>